<sequence>MKVTVGPDPSLVYRPDVDPEVAKDKASFRNYTSGPLLDRVFTTYKLMHTHQTVDFVRSKHAQFGGFSYKKMTVMEAVDLLDGLVDESDPDVDFPNSFHAFQTAEGIRKAHPDKDWFHLVGLLHDLGKVLALFGEPQWAVVGDTFPVGCRPQASVVFCDSTFQDNPDLQDPRYSTELGMYQPHCGLDRVLMSWGHDEYMYQVMKFNKFSLPPEAFYMIRFHSFYPWHTGRDYQQLCSQQDLAMLPWVREFNKFDLYTKCPDLPDVDKLRPYYQGLIDKYCPGILSW</sequence>
<gene>
    <name type="primary">MIOX</name>
    <name type="synonym">ALDRL6</name>
    <name type="synonym">KSP32</name>
    <name type="synonym">RSOR</name>
</gene>
<keyword id="KW-0002">3D-structure</keyword>
<keyword id="KW-0025">Alternative splicing</keyword>
<keyword id="KW-0963">Cytoplasm</keyword>
<keyword id="KW-0408">Iron</keyword>
<keyword id="KW-0479">Metal-binding</keyword>
<keyword id="KW-0560">Oxidoreductase</keyword>
<keyword id="KW-0597">Phosphoprotein</keyword>
<keyword id="KW-1267">Proteomics identification</keyword>
<keyword id="KW-1185">Reference proteome</keyword>
<accession>Q9UGB7</accession>
<accession>Q05DJ6</accession>
<accession>Q5S8C9</accession>
<accession>Q9BZZ1</accession>
<accession>Q9UHB8</accession>
<dbReference type="EC" id="1.13.99.1"/>
<dbReference type="EMBL" id="AY064416">
    <property type="protein sequence ID" value="AAL47192.1"/>
    <property type="molecule type" value="mRNA"/>
</dbReference>
<dbReference type="EMBL" id="AF230095">
    <property type="protein sequence ID" value="AAK00766.1"/>
    <property type="molecule type" value="mRNA"/>
</dbReference>
<dbReference type="EMBL" id="AF197129">
    <property type="protein sequence ID" value="AAF25204.1"/>
    <property type="molecule type" value="mRNA"/>
</dbReference>
<dbReference type="EMBL" id="AY738258">
    <property type="protein sequence ID" value="AAV65816.1"/>
    <property type="molecule type" value="mRNA"/>
</dbReference>
<dbReference type="EMBL" id="AK000576">
    <property type="protein sequence ID" value="BAA91266.1"/>
    <property type="molecule type" value="mRNA"/>
</dbReference>
<dbReference type="EMBL" id="CR456478">
    <property type="protein sequence ID" value="CAG30364.1"/>
    <property type="molecule type" value="mRNA"/>
</dbReference>
<dbReference type="EMBL" id="AL096767">
    <property type="status" value="NOT_ANNOTATED_CDS"/>
    <property type="molecule type" value="Genomic_DNA"/>
</dbReference>
<dbReference type="EMBL" id="CH471138">
    <property type="protein sequence ID" value="EAW73547.1"/>
    <property type="molecule type" value="Genomic_DNA"/>
</dbReference>
<dbReference type="EMBL" id="BC012025">
    <property type="protein sequence ID" value="AAH12025.1"/>
    <property type="molecule type" value="mRNA"/>
</dbReference>
<dbReference type="EMBL" id="BC073848">
    <property type="protein sequence ID" value="AAH73848.1"/>
    <property type="molecule type" value="mRNA"/>
</dbReference>
<dbReference type="CCDS" id="CCDS14092.1">
    <molecule id="Q9UGB7-1"/>
</dbReference>
<dbReference type="RefSeq" id="NP_060054.4">
    <molecule id="Q9UGB7-1"/>
    <property type="nucleotide sequence ID" value="NM_017584.5"/>
</dbReference>
<dbReference type="PDB" id="2IBN">
    <property type="method" value="X-ray"/>
    <property type="resolution" value="1.50 A"/>
    <property type="chains" value="A/B=38-285"/>
</dbReference>
<dbReference type="PDBsum" id="2IBN"/>
<dbReference type="SMR" id="Q9UGB7"/>
<dbReference type="BioGRID" id="120733">
    <property type="interactions" value="18"/>
</dbReference>
<dbReference type="FunCoup" id="Q9UGB7">
    <property type="interactions" value="360"/>
</dbReference>
<dbReference type="IntAct" id="Q9UGB7">
    <property type="interactions" value="12"/>
</dbReference>
<dbReference type="STRING" id="9606.ENSP00000216075"/>
<dbReference type="iPTMnet" id="Q9UGB7"/>
<dbReference type="PhosphoSitePlus" id="Q9UGB7"/>
<dbReference type="BioMuta" id="MIOX"/>
<dbReference type="MassIVE" id="Q9UGB7"/>
<dbReference type="PaxDb" id="9606-ENSP00000216075"/>
<dbReference type="PeptideAtlas" id="Q9UGB7"/>
<dbReference type="ProteomicsDB" id="84204">
    <molecule id="Q9UGB7-1"/>
</dbReference>
<dbReference type="ProteomicsDB" id="84205">
    <molecule id="Q9UGB7-2"/>
</dbReference>
<dbReference type="TopDownProteomics" id="Q9UGB7-1">
    <molecule id="Q9UGB7-1"/>
</dbReference>
<dbReference type="Antibodypedia" id="53923">
    <property type="antibodies" value="322 antibodies from 21 providers"/>
</dbReference>
<dbReference type="DNASU" id="55586"/>
<dbReference type="Ensembl" id="ENST00000216075.11">
    <molecule id="Q9UGB7-1"/>
    <property type="protein sequence ID" value="ENSP00000216075.6"/>
    <property type="gene ID" value="ENSG00000100253.13"/>
</dbReference>
<dbReference type="Ensembl" id="ENST00000395733.7">
    <molecule id="Q9UGB7-2"/>
    <property type="protein sequence ID" value="ENSP00000379082.3"/>
    <property type="gene ID" value="ENSG00000100253.13"/>
</dbReference>
<dbReference type="GeneID" id="55586"/>
<dbReference type="KEGG" id="hsa:55586"/>
<dbReference type="MANE-Select" id="ENST00000216075.11">
    <property type="protein sequence ID" value="ENSP00000216075.6"/>
    <property type="RefSeq nucleotide sequence ID" value="NM_017584.6"/>
    <property type="RefSeq protein sequence ID" value="NP_060054.4"/>
</dbReference>
<dbReference type="UCSC" id="uc003bll.2">
    <molecule id="Q9UGB7-1"/>
    <property type="organism name" value="human"/>
</dbReference>
<dbReference type="AGR" id="HGNC:14522"/>
<dbReference type="CTD" id="55586"/>
<dbReference type="DisGeNET" id="55586"/>
<dbReference type="GeneCards" id="MIOX"/>
<dbReference type="HGNC" id="HGNC:14522">
    <property type="gene designation" value="MIOX"/>
</dbReference>
<dbReference type="HPA" id="ENSG00000100253">
    <property type="expression patterns" value="Tissue enriched (kidney)"/>
</dbReference>
<dbReference type="MIM" id="606774">
    <property type="type" value="gene"/>
</dbReference>
<dbReference type="neXtProt" id="NX_Q9UGB7"/>
<dbReference type="OpenTargets" id="ENSG00000100253"/>
<dbReference type="PharmGKB" id="PA24716"/>
<dbReference type="VEuPathDB" id="HostDB:ENSG00000100253"/>
<dbReference type="eggNOG" id="KOG1573">
    <property type="taxonomic scope" value="Eukaryota"/>
</dbReference>
<dbReference type="GeneTree" id="ENSGT00390000016211"/>
<dbReference type="HOGENOM" id="CLU_1351676_0_0_1"/>
<dbReference type="InParanoid" id="Q9UGB7"/>
<dbReference type="OMA" id="RYNTKYG"/>
<dbReference type="OrthoDB" id="5151075at2759"/>
<dbReference type="PAN-GO" id="Q9UGB7">
    <property type="GO annotations" value="2 GO annotations based on evolutionary models"/>
</dbReference>
<dbReference type="PhylomeDB" id="Q9UGB7"/>
<dbReference type="TreeFam" id="TF300089"/>
<dbReference type="BRENDA" id="1.13.99.1">
    <property type="organism ID" value="2681"/>
</dbReference>
<dbReference type="PathwayCommons" id="Q9UGB7"/>
<dbReference type="Reactome" id="R-HSA-1855183">
    <property type="pathway name" value="Synthesis of IP2, IP, and Ins in the cytosol"/>
</dbReference>
<dbReference type="SABIO-RK" id="Q9UGB7"/>
<dbReference type="UniPathway" id="UPA00111">
    <property type="reaction ID" value="UER00527"/>
</dbReference>
<dbReference type="BioGRID-ORCS" id="55586">
    <property type="hits" value="10 hits in 1144 CRISPR screens"/>
</dbReference>
<dbReference type="ChiTaRS" id="MIOX">
    <property type="organism name" value="human"/>
</dbReference>
<dbReference type="EvolutionaryTrace" id="Q9UGB7"/>
<dbReference type="GenomeRNAi" id="55586"/>
<dbReference type="Pharos" id="Q9UGB7">
    <property type="development level" value="Tbio"/>
</dbReference>
<dbReference type="PRO" id="PR:Q9UGB7"/>
<dbReference type="Proteomes" id="UP000005640">
    <property type="component" value="Chromosome 22"/>
</dbReference>
<dbReference type="RNAct" id="Q9UGB7">
    <property type="molecule type" value="protein"/>
</dbReference>
<dbReference type="Bgee" id="ENSG00000100253">
    <property type="expression patterns" value="Expressed in kidney epithelium and 74 other cell types or tissues"/>
</dbReference>
<dbReference type="ExpressionAtlas" id="Q9UGB7">
    <property type="expression patterns" value="baseline and differential"/>
</dbReference>
<dbReference type="GO" id="GO:0005737">
    <property type="term" value="C:cytoplasm"/>
    <property type="evidence" value="ECO:0000250"/>
    <property type="project" value="UniProtKB"/>
</dbReference>
<dbReference type="GO" id="GO:0005829">
    <property type="term" value="C:cytosol"/>
    <property type="evidence" value="ECO:0000304"/>
    <property type="project" value="Reactome"/>
</dbReference>
<dbReference type="GO" id="GO:0016234">
    <property type="term" value="C:inclusion body"/>
    <property type="evidence" value="ECO:0000250"/>
    <property type="project" value="UniProtKB"/>
</dbReference>
<dbReference type="GO" id="GO:0004033">
    <property type="term" value="F:aldo-keto reductase (NADPH) activity"/>
    <property type="evidence" value="ECO:0000250"/>
    <property type="project" value="UniProtKB"/>
</dbReference>
<dbReference type="GO" id="GO:0008199">
    <property type="term" value="F:ferric iron binding"/>
    <property type="evidence" value="ECO:0000314"/>
    <property type="project" value="UniProtKB"/>
</dbReference>
<dbReference type="GO" id="GO:0050113">
    <property type="term" value="F:inositol oxygenase activity"/>
    <property type="evidence" value="ECO:0000314"/>
    <property type="project" value="UniProtKB"/>
</dbReference>
<dbReference type="GO" id="GO:0016651">
    <property type="term" value="F:oxidoreductase activity, acting on NAD(P)H"/>
    <property type="evidence" value="ECO:0007669"/>
    <property type="project" value="Ensembl"/>
</dbReference>
<dbReference type="GO" id="GO:0019310">
    <property type="term" value="P:inositol catabolic process"/>
    <property type="evidence" value="ECO:0000314"/>
    <property type="project" value="UniProtKB"/>
</dbReference>
<dbReference type="InterPro" id="IPR007828">
    <property type="entry name" value="Inositol_oxygenase"/>
</dbReference>
<dbReference type="PANTHER" id="PTHR12588:SF0">
    <property type="entry name" value="INOSITOL OXYGENASE"/>
    <property type="match status" value="1"/>
</dbReference>
<dbReference type="PANTHER" id="PTHR12588">
    <property type="entry name" value="MYOINOSITOL OXYGENASE"/>
    <property type="match status" value="1"/>
</dbReference>
<dbReference type="Pfam" id="PF05153">
    <property type="entry name" value="MIOX"/>
    <property type="match status" value="1"/>
</dbReference>
<dbReference type="SUPFAM" id="SSF109604">
    <property type="entry name" value="HD-domain/PDEase-like"/>
    <property type="match status" value="1"/>
</dbReference>
<proteinExistence type="evidence at protein level"/>
<evidence type="ECO:0000250" key="1"/>
<evidence type="ECO:0000250" key="2">
    <source>
        <dbReference type="UniProtKB" id="Q9QXN4"/>
    </source>
</evidence>
<evidence type="ECO:0000269" key="3">
    <source>
    </source>
</evidence>
<evidence type="ECO:0000303" key="4">
    <source>
    </source>
</evidence>
<evidence type="ECO:0000305" key="5"/>
<evidence type="ECO:0007829" key="6">
    <source>
        <dbReference type="PDB" id="2IBN"/>
    </source>
</evidence>
<name>MIOX_HUMAN</name>
<reference key="1">
    <citation type="submission" date="2001-11" db="EMBL/GenBank/DDBJ databases">
        <title>Cloning and expression of human myo-inositol oxygenase (MIOX).</title>
        <authorList>
            <person name="Parthasarathy L."/>
            <person name="Seelan R."/>
            <person name="Parthasarathy R."/>
        </authorList>
    </citation>
    <scope>NUCLEOTIDE SEQUENCE [MRNA] (ISOFORM 1)</scope>
</reference>
<reference key="2">
    <citation type="submission" date="2000-02" db="EMBL/GenBank/DDBJ databases">
        <title>Identification of a novel kidney specific gene, KSP32, that is down regulated in acute ischemic renal failure.</title>
        <authorList>
            <person name="Hu E."/>
            <person name="Chen Z."/>
            <person name="Fredrickson T."/>
            <person name="Gellai M."/>
            <person name="Jugus M."/>
            <person name="Contino L."/>
            <person name="Spurr N."/>
            <person name="Sims M."/>
            <person name="Halsey W."/>
            <person name="Van Horn S."/>
            <person name="Mao J."/>
            <person name="Sathe G."/>
            <person name="Brooks D."/>
        </authorList>
    </citation>
    <scope>NUCLEOTIDE SEQUENCE [MRNA] (ISOFORM 1)</scope>
    <source>
        <tissue>Kidney</tissue>
    </source>
</reference>
<reference key="3">
    <citation type="journal article" date="2000" name="Proc. Natl. Acad. Sci. U.S.A.">
        <title>Identification of a renal-specific oxido-reductase in newborn diabetic mice.</title>
        <authorList>
            <person name="Yang Q."/>
            <person name="Dixit B."/>
            <person name="Wada J."/>
            <person name="Tian Y."/>
            <person name="Wallner E.I."/>
            <person name="Srivastva S.K."/>
            <person name="Kanwar Y.S."/>
        </authorList>
    </citation>
    <scope>NUCLEOTIDE SEQUENCE [MRNA] (ISOFORM 1)</scope>
    <source>
        <tissue>Kidney</tissue>
    </source>
</reference>
<reference key="4">
    <citation type="journal article" date="2004" name="Biochem. Biophys. Res. Commun.">
        <title>Molecular cloning, expression, and characterization of myo-inositol oxygenase from mouse, rat, and human kidney.</title>
        <authorList>
            <person name="Arner R.J."/>
            <person name="Prabhu K.S."/>
            <person name="Reddy C.C."/>
        </authorList>
    </citation>
    <scope>NUCLEOTIDE SEQUENCE [MRNA] (ISOFORM 1)</scope>
    <source>
        <tissue>Kidney</tissue>
    </source>
</reference>
<reference key="5">
    <citation type="journal article" date="2004" name="Nat. Genet.">
        <title>Complete sequencing and characterization of 21,243 full-length human cDNAs.</title>
        <authorList>
            <person name="Ota T."/>
            <person name="Suzuki Y."/>
            <person name="Nishikawa T."/>
            <person name="Otsuki T."/>
            <person name="Sugiyama T."/>
            <person name="Irie R."/>
            <person name="Wakamatsu A."/>
            <person name="Hayashi K."/>
            <person name="Sato H."/>
            <person name="Nagai K."/>
            <person name="Kimura K."/>
            <person name="Makita H."/>
            <person name="Sekine M."/>
            <person name="Obayashi M."/>
            <person name="Nishi T."/>
            <person name="Shibahara T."/>
            <person name="Tanaka T."/>
            <person name="Ishii S."/>
            <person name="Yamamoto J."/>
            <person name="Saito K."/>
            <person name="Kawai Y."/>
            <person name="Isono Y."/>
            <person name="Nakamura Y."/>
            <person name="Nagahari K."/>
            <person name="Murakami K."/>
            <person name="Yasuda T."/>
            <person name="Iwayanagi T."/>
            <person name="Wagatsuma M."/>
            <person name="Shiratori A."/>
            <person name="Sudo H."/>
            <person name="Hosoiri T."/>
            <person name="Kaku Y."/>
            <person name="Kodaira H."/>
            <person name="Kondo H."/>
            <person name="Sugawara M."/>
            <person name="Takahashi M."/>
            <person name="Kanda K."/>
            <person name="Yokoi T."/>
            <person name="Furuya T."/>
            <person name="Kikkawa E."/>
            <person name="Omura Y."/>
            <person name="Abe K."/>
            <person name="Kamihara K."/>
            <person name="Katsuta N."/>
            <person name="Sato K."/>
            <person name="Tanikawa M."/>
            <person name="Yamazaki M."/>
            <person name="Ninomiya K."/>
            <person name="Ishibashi T."/>
            <person name="Yamashita H."/>
            <person name="Murakawa K."/>
            <person name="Fujimori K."/>
            <person name="Tanai H."/>
            <person name="Kimata M."/>
            <person name="Watanabe M."/>
            <person name="Hiraoka S."/>
            <person name="Chiba Y."/>
            <person name="Ishida S."/>
            <person name="Ono Y."/>
            <person name="Takiguchi S."/>
            <person name="Watanabe S."/>
            <person name="Yosida M."/>
            <person name="Hotuta T."/>
            <person name="Kusano J."/>
            <person name="Kanehori K."/>
            <person name="Takahashi-Fujii A."/>
            <person name="Hara H."/>
            <person name="Tanase T.-O."/>
            <person name="Nomura Y."/>
            <person name="Togiya S."/>
            <person name="Komai F."/>
            <person name="Hara R."/>
            <person name="Takeuchi K."/>
            <person name="Arita M."/>
            <person name="Imose N."/>
            <person name="Musashino K."/>
            <person name="Yuuki H."/>
            <person name="Oshima A."/>
            <person name="Sasaki N."/>
            <person name="Aotsuka S."/>
            <person name="Yoshikawa Y."/>
            <person name="Matsunawa H."/>
            <person name="Ichihara T."/>
            <person name="Shiohata N."/>
            <person name="Sano S."/>
            <person name="Moriya S."/>
            <person name="Momiyama H."/>
            <person name="Satoh N."/>
            <person name="Takami S."/>
            <person name="Terashima Y."/>
            <person name="Suzuki O."/>
            <person name="Nakagawa S."/>
            <person name="Senoh A."/>
            <person name="Mizoguchi H."/>
            <person name="Goto Y."/>
            <person name="Shimizu F."/>
            <person name="Wakebe H."/>
            <person name="Hishigaki H."/>
            <person name="Watanabe T."/>
            <person name="Sugiyama A."/>
            <person name="Takemoto M."/>
            <person name="Kawakami B."/>
            <person name="Yamazaki M."/>
            <person name="Watanabe K."/>
            <person name="Kumagai A."/>
            <person name="Itakura S."/>
            <person name="Fukuzumi Y."/>
            <person name="Fujimori Y."/>
            <person name="Komiyama M."/>
            <person name="Tashiro H."/>
            <person name="Tanigami A."/>
            <person name="Fujiwara T."/>
            <person name="Ono T."/>
            <person name="Yamada K."/>
            <person name="Fujii Y."/>
            <person name="Ozaki K."/>
            <person name="Hirao M."/>
            <person name="Ohmori Y."/>
            <person name="Kawabata A."/>
            <person name="Hikiji T."/>
            <person name="Kobatake N."/>
            <person name="Inagaki H."/>
            <person name="Ikema Y."/>
            <person name="Okamoto S."/>
            <person name="Okitani R."/>
            <person name="Kawakami T."/>
            <person name="Noguchi S."/>
            <person name="Itoh T."/>
            <person name="Shigeta K."/>
            <person name="Senba T."/>
            <person name="Matsumura K."/>
            <person name="Nakajima Y."/>
            <person name="Mizuno T."/>
            <person name="Morinaga M."/>
            <person name="Sasaki M."/>
            <person name="Togashi T."/>
            <person name="Oyama M."/>
            <person name="Hata H."/>
            <person name="Watanabe M."/>
            <person name="Komatsu T."/>
            <person name="Mizushima-Sugano J."/>
            <person name="Satoh T."/>
            <person name="Shirai Y."/>
            <person name="Takahashi Y."/>
            <person name="Nakagawa K."/>
            <person name="Okumura K."/>
            <person name="Nagase T."/>
            <person name="Nomura N."/>
            <person name="Kikuchi H."/>
            <person name="Masuho Y."/>
            <person name="Yamashita R."/>
            <person name="Nakai K."/>
            <person name="Yada T."/>
            <person name="Nakamura Y."/>
            <person name="Ohara O."/>
            <person name="Isogai T."/>
            <person name="Sugano S."/>
        </authorList>
    </citation>
    <scope>NUCLEOTIDE SEQUENCE [LARGE SCALE MRNA] (ISOFORM 1)</scope>
</reference>
<reference key="6">
    <citation type="journal article" date="2004" name="Genome Biol.">
        <title>A genome annotation-driven approach to cloning the human ORFeome.</title>
        <authorList>
            <person name="Collins J.E."/>
            <person name="Wright C.L."/>
            <person name="Edwards C.A."/>
            <person name="Davis M.P."/>
            <person name="Grinham J.A."/>
            <person name="Cole C.G."/>
            <person name="Goward M.E."/>
            <person name="Aguado B."/>
            <person name="Mallya M."/>
            <person name="Mokrab Y."/>
            <person name="Huckle E.J."/>
            <person name="Beare D.M."/>
            <person name="Dunham I."/>
        </authorList>
    </citation>
    <scope>NUCLEOTIDE SEQUENCE [LARGE SCALE MRNA] (ISOFORM 1)</scope>
</reference>
<reference key="7">
    <citation type="journal article" date="1999" name="Nature">
        <title>The DNA sequence of human chromosome 22.</title>
        <authorList>
            <person name="Dunham I."/>
            <person name="Hunt A.R."/>
            <person name="Collins J.E."/>
            <person name="Bruskiewich R."/>
            <person name="Beare D.M."/>
            <person name="Clamp M."/>
            <person name="Smink L.J."/>
            <person name="Ainscough R."/>
            <person name="Almeida J.P."/>
            <person name="Babbage A.K."/>
            <person name="Bagguley C."/>
            <person name="Bailey J."/>
            <person name="Barlow K.F."/>
            <person name="Bates K.N."/>
            <person name="Beasley O.P."/>
            <person name="Bird C.P."/>
            <person name="Blakey S.E."/>
            <person name="Bridgeman A.M."/>
            <person name="Buck D."/>
            <person name="Burgess J."/>
            <person name="Burrill W.D."/>
            <person name="Burton J."/>
            <person name="Carder C."/>
            <person name="Carter N.P."/>
            <person name="Chen Y."/>
            <person name="Clark G."/>
            <person name="Clegg S.M."/>
            <person name="Cobley V.E."/>
            <person name="Cole C.G."/>
            <person name="Collier R.E."/>
            <person name="Connor R."/>
            <person name="Conroy D."/>
            <person name="Corby N.R."/>
            <person name="Coville G.J."/>
            <person name="Cox A.V."/>
            <person name="Davis J."/>
            <person name="Dawson E."/>
            <person name="Dhami P.D."/>
            <person name="Dockree C."/>
            <person name="Dodsworth S.J."/>
            <person name="Durbin R.M."/>
            <person name="Ellington A.G."/>
            <person name="Evans K.L."/>
            <person name="Fey J.M."/>
            <person name="Fleming K."/>
            <person name="French L."/>
            <person name="Garner A.A."/>
            <person name="Gilbert J.G.R."/>
            <person name="Goward M.E."/>
            <person name="Grafham D.V."/>
            <person name="Griffiths M.N.D."/>
            <person name="Hall C."/>
            <person name="Hall R.E."/>
            <person name="Hall-Tamlyn G."/>
            <person name="Heathcott R.W."/>
            <person name="Ho S."/>
            <person name="Holmes S."/>
            <person name="Hunt S.E."/>
            <person name="Jones M.C."/>
            <person name="Kershaw J."/>
            <person name="Kimberley A.M."/>
            <person name="King A."/>
            <person name="Laird G.K."/>
            <person name="Langford C.F."/>
            <person name="Leversha M.A."/>
            <person name="Lloyd C."/>
            <person name="Lloyd D.M."/>
            <person name="Martyn I.D."/>
            <person name="Mashreghi-Mohammadi M."/>
            <person name="Matthews L.H."/>
            <person name="Mccann O.T."/>
            <person name="Mcclay J."/>
            <person name="Mclaren S."/>
            <person name="McMurray A.A."/>
            <person name="Milne S.A."/>
            <person name="Mortimore B.J."/>
            <person name="Odell C.N."/>
            <person name="Pavitt R."/>
            <person name="Pearce A.V."/>
            <person name="Pearson D."/>
            <person name="Phillimore B.J.C.T."/>
            <person name="Phillips S.H."/>
            <person name="Plumb R.W."/>
            <person name="Ramsay H."/>
            <person name="Ramsey Y."/>
            <person name="Rogers L."/>
            <person name="Ross M.T."/>
            <person name="Scott C.E."/>
            <person name="Sehra H.K."/>
            <person name="Skuce C.D."/>
            <person name="Smalley S."/>
            <person name="Smith M.L."/>
            <person name="Soderlund C."/>
            <person name="Spragon L."/>
            <person name="Steward C.A."/>
            <person name="Sulston J.E."/>
            <person name="Swann R.M."/>
            <person name="Vaudin M."/>
            <person name="Wall M."/>
            <person name="Wallis J.M."/>
            <person name="Whiteley M.N."/>
            <person name="Willey D.L."/>
            <person name="Williams L."/>
            <person name="Williams S.A."/>
            <person name="Williamson H."/>
            <person name="Wilmer T.E."/>
            <person name="Wilming L."/>
            <person name="Wright C.L."/>
            <person name="Hubbard T."/>
            <person name="Bentley D.R."/>
            <person name="Beck S."/>
            <person name="Rogers J."/>
            <person name="Shimizu N."/>
            <person name="Minoshima S."/>
            <person name="Kawasaki K."/>
            <person name="Sasaki T."/>
            <person name="Asakawa S."/>
            <person name="Kudoh J."/>
            <person name="Shintani A."/>
            <person name="Shibuya K."/>
            <person name="Yoshizaki Y."/>
            <person name="Aoki N."/>
            <person name="Mitsuyama S."/>
            <person name="Roe B.A."/>
            <person name="Chen F."/>
            <person name="Chu L."/>
            <person name="Crabtree J."/>
            <person name="Deschamps S."/>
            <person name="Do A."/>
            <person name="Do T."/>
            <person name="Dorman A."/>
            <person name="Fang F."/>
            <person name="Fu Y."/>
            <person name="Hu P."/>
            <person name="Hua A."/>
            <person name="Kenton S."/>
            <person name="Lai H."/>
            <person name="Lao H.I."/>
            <person name="Lewis J."/>
            <person name="Lewis S."/>
            <person name="Lin S.-P."/>
            <person name="Loh P."/>
            <person name="Malaj E."/>
            <person name="Nguyen T."/>
            <person name="Pan H."/>
            <person name="Phan S."/>
            <person name="Qi S."/>
            <person name="Qian Y."/>
            <person name="Ray L."/>
            <person name="Ren Q."/>
            <person name="Shaull S."/>
            <person name="Sloan D."/>
            <person name="Song L."/>
            <person name="Wang Q."/>
            <person name="Wang Y."/>
            <person name="Wang Z."/>
            <person name="White J."/>
            <person name="Willingham D."/>
            <person name="Wu H."/>
            <person name="Yao Z."/>
            <person name="Zhan M."/>
            <person name="Zhang G."/>
            <person name="Chissoe S."/>
            <person name="Murray J."/>
            <person name="Miller N."/>
            <person name="Minx P."/>
            <person name="Fulton R."/>
            <person name="Johnson D."/>
            <person name="Bemis G."/>
            <person name="Bentley D."/>
            <person name="Bradshaw H."/>
            <person name="Bourne S."/>
            <person name="Cordes M."/>
            <person name="Du Z."/>
            <person name="Fulton L."/>
            <person name="Goela D."/>
            <person name="Graves T."/>
            <person name="Hawkins J."/>
            <person name="Hinds K."/>
            <person name="Kemp K."/>
            <person name="Latreille P."/>
            <person name="Layman D."/>
            <person name="Ozersky P."/>
            <person name="Rohlfing T."/>
            <person name="Scheet P."/>
            <person name="Walker C."/>
            <person name="Wamsley A."/>
            <person name="Wohldmann P."/>
            <person name="Pepin K."/>
            <person name="Nelson J."/>
            <person name="Korf I."/>
            <person name="Bedell J.A."/>
            <person name="Hillier L.W."/>
            <person name="Mardis E."/>
            <person name="Waterston R."/>
            <person name="Wilson R."/>
            <person name="Emanuel B.S."/>
            <person name="Shaikh T."/>
            <person name="Kurahashi H."/>
            <person name="Saitta S."/>
            <person name="Budarf M.L."/>
            <person name="McDermid H.E."/>
            <person name="Johnson A."/>
            <person name="Wong A.C.C."/>
            <person name="Morrow B.E."/>
            <person name="Edelmann L."/>
            <person name="Kim U.J."/>
            <person name="Shizuya H."/>
            <person name="Simon M.I."/>
            <person name="Dumanski J.P."/>
            <person name="Peyrard M."/>
            <person name="Kedra D."/>
            <person name="Seroussi E."/>
            <person name="Fransson I."/>
            <person name="Tapia I."/>
            <person name="Bruder C.E."/>
            <person name="O'Brien K.P."/>
            <person name="Wilkinson P."/>
            <person name="Bodenteich A."/>
            <person name="Hartman K."/>
            <person name="Hu X."/>
            <person name="Khan A.S."/>
            <person name="Lane L."/>
            <person name="Tilahun Y."/>
            <person name="Wright H."/>
        </authorList>
    </citation>
    <scope>NUCLEOTIDE SEQUENCE [LARGE SCALE GENOMIC DNA]</scope>
</reference>
<reference key="8">
    <citation type="submission" date="2005-07" db="EMBL/GenBank/DDBJ databases">
        <authorList>
            <person name="Mural R.J."/>
            <person name="Istrail S."/>
            <person name="Sutton G.G."/>
            <person name="Florea L."/>
            <person name="Halpern A.L."/>
            <person name="Mobarry C.M."/>
            <person name="Lippert R."/>
            <person name="Walenz B."/>
            <person name="Shatkay H."/>
            <person name="Dew I."/>
            <person name="Miller J.R."/>
            <person name="Flanigan M.J."/>
            <person name="Edwards N.J."/>
            <person name="Bolanos R."/>
            <person name="Fasulo D."/>
            <person name="Halldorsson B.V."/>
            <person name="Hannenhalli S."/>
            <person name="Turner R."/>
            <person name="Yooseph S."/>
            <person name="Lu F."/>
            <person name="Nusskern D.R."/>
            <person name="Shue B.C."/>
            <person name="Zheng X.H."/>
            <person name="Zhong F."/>
            <person name="Delcher A.L."/>
            <person name="Huson D.H."/>
            <person name="Kravitz S.A."/>
            <person name="Mouchard L."/>
            <person name="Reinert K."/>
            <person name="Remington K.A."/>
            <person name="Clark A.G."/>
            <person name="Waterman M.S."/>
            <person name="Eichler E.E."/>
            <person name="Adams M.D."/>
            <person name="Hunkapiller M.W."/>
            <person name="Myers E.W."/>
            <person name="Venter J.C."/>
        </authorList>
    </citation>
    <scope>NUCLEOTIDE SEQUENCE [LARGE SCALE GENOMIC DNA]</scope>
</reference>
<reference key="9">
    <citation type="journal article" date="2004" name="Genome Res.">
        <title>The status, quality, and expansion of the NIH full-length cDNA project: the Mammalian Gene Collection (MGC).</title>
        <authorList>
            <consortium name="The MGC Project Team"/>
        </authorList>
    </citation>
    <scope>NUCLEOTIDE SEQUENCE [LARGE SCALE MRNA] (ISOFORMS 1 AND 2)</scope>
    <source>
        <tissue>Colon</tissue>
        <tissue>Kidney</tissue>
    </source>
</reference>
<reference key="10">
    <citation type="journal article" date="2008" name="J. Biol. Chem.">
        <title>Structural and biophysical characterization of human myo-inositol oxygenase.</title>
        <authorList>
            <person name="Thorsell A.G."/>
            <person name="Persson C."/>
            <person name="Voevodskaya N."/>
            <person name="Busam R.D."/>
            <person name="Hammarstrom M."/>
            <person name="Graslund S."/>
            <person name="Graslund A."/>
            <person name="Hallberg B.M."/>
        </authorList>
    </citation>
    <scope>X-RAY CRYSTALLOGRAPHY (1.5 ANGSTROMS) OF 38-285 IN COMPLEX WITH IRON AND MYO-INOSOSE-1</scope>
    <scope>CATALYTIC ACTIVITY</scope>
    <scope>COFACTOR</scope>
    <scope>MUTAGENESIS OF LYS-127</scope>
</reference>
<comment type="catalytic activity">
    <reaction evidence="3">
        <text>myo-inositol + O2 = D-glucuronate + H2O + H(+)</text>
        <dbReference type="Rhea" id="RHEA:23696"/>
        <dbReference type="ChEBI" id="CHEBI:15377"/>
        <dbReference type="ChEBI" id="CHEBI:15378"/>
        <dbReference type="ChEBI" id="CHEBI:15379"/>
        <dbReference type="ChEBI" id="CHEBI:17268"/>
        <dbReference type="ChEBI" id="CHEBI:58720"/>
        <dbReference type="EC" id="1.13.99.1"/>
    </reaction>
</comment>
<comment type="cofactor">
    <cofactor evidence="3">
        <name>Fe cation</name>
        <dbReference type="ChEBI" id="CHEBI:24875"/>
    </cofactor>
    <text evidence="3">Binds 2 iron ions per subunit.</text>
</comment>
<comment type="pathway">
    <text>Polyol metabolism; myo-inositol degradation into D-glucuronate; D-glucuronate from myo-inositol: step 1/1.</text>
</comment>
<comment type="subcellular location">
    <subcellularLocation>
        <location evidence="1">Cytoplasm</location>
    </subcellularLocation>
</comment>
<comment type="alternative products">
    <event type="alternative splicing"/>
    <isoform>
        <id>Q9UGB7-1</id>
        <name>1</name>
        <sequence type="displayed"/>
    </isoform>
    <isoform>
        <id>Q9UGB7-2</id>
        <name>2</name>
        <sequence type="described" ref="VSP_041667 VSP_041668"/>
    </isoform>
</comment>
<comment type="tissue specificity">
    <text>Kidney specific.</text>
</comment>
<comment type="similarity">
    <text evidence="5">Belongs to the myo-inositol oxygenase family.</text>
</comment>
<organism>
    <name type="scientific">Homo sapiens</name>
    <name type="common">Human</name>
    <dbReference type="NCBI Taxonomy" id="9606"/>
    <lineage>
        <taxon>Eukaryota</taxon>
        <taxon>Metazoa</taxon>
        <taxon>Chordata</taxon>
        <taxon>Craniata</taxon>
        <taxon>Vertebrata</taxon>
        <taxon>Euteleostomi</taxon>
        <taxon>Mammalia</taxon>
        <taxon>Eutheria</taxon>
        <taxon>Euarchontoglires</taxon>
        <taxon>Primates</taxon>
        <taxon>Haplorrhini</taxon>
        <taxon>Catarrhini</taxon>
        <taxon>Hominidae</taxon>
        <taxon>Homo</taxon>
    </lineage>
</organism>
<feature type="chain" id="PRO_0000079148" description="Inositol oxygenase">
    <location>
        <begin position="1"/>
        <end position="285"/>
    </location>
</feature>
<feature type="binding site" evidence="1">
    <location>
        <position position="29"/>
    </location>
    <ligand>
        <name>substrate</name>
    </ligand>
</feature>
<feature type="binding site">
    <location>
        <begin position="85"/>
        <end position="87"/>
    </location>
    <ligand>
        <name>substrate</name>
    </ligand>
</feature>
<feature type="binding site" evidence="3">
    <location>
        <position position="98"/>
    </location>
    <ligand>
        <name>Fe cation</name>
        <dbReference type="ChEBI" id="CHEBI:24875"/>
        <label>1</label>
    </ligand>
</feature>
<feature type="binding site" evidence="3">
    <location>
        <position position="123"/>
    </location>
    <ligand>
        <name>Fe cation</name>
        <dbReference type="ChEBI" id="CHEBI:24875"/>
        <label>1</label>
    </ligand>
</feature>
<feature type="binding site" evidence="3">
    <location>
        <position position="124"/>
    </location>
    <ligand>
        <name>Fe cation</name>
        <dbReference type="ChEBI" id="CHEBI:24875"/>
        <label>1</label>
    </ligand>
</feature>
<feature type="binding site" evidence="3">
    <location>
        <position position="124"/>
    </location>
    <ligand>
        <name>Fe cation</name>
        <dbReference type="ChEBI" id="CHEBI:24875"/>
        <label>2</label>
    </ligand>
</feature>
<feature type="binding site">
    <location>
        <position position="127"/>
    </location>
    <ligand>
        <name>substrate</name>
    </ligand>
</feature>
<feature type="binding site">
    <location>
        <begin position="141"/>
        <end position="142"/>
    </location>
    <ligand>
        <name>substrate</name>
    </ligand>
</feature>
<feature type="binding site" evidence="3">
    <location>
        <position position="194"/>
    </location>
    <ligand>
        <name>Fe cation</name>
        <dbReference type="ChEBI" id="CHEBI:24875"/>
        <label>2</label>
    </ligand>
</feature>
<feature type="binding site">
    <location>
        <begin position="220"/>
        <end position="221"/>
    </location>
    <ligand>
        <name>substrate</name>
    </ligand>
</feature>
<feature type="binding site" evidence="3">
    <location>
        <position position="220"/>
    </location>
    <ligand>
        <name>Fe cation</name>
        <dbReference type="ChEBI" id="CHEBI:24875"/>
        <label>2</label>
    </ligand>
</feature>
<feature type="binding site" evidence="3">
    <location>
        <position position="253"/>
    </location>
    <ligand>
        <name>Fe cation</name>
        <dbReference type="ChEBI" id="CHEBI:24875"/>
        <label>1</label>
    </ligand>
</feature>
<feature type="modified residue" description="Phosphoserine" evidence="2">
    <location>
        <position position="33"/>
    </location>
</feature>
<feature type="splice variant" id="VSP_041667" description="In isoform 2." evidence="4">
    <original>DWFHLVGLLHDLGKVLALFGEPQWAVVGDTFPVGCRPQASVVFCDSTFQDNPDLQDPRYSTELGMYQPHCGLDRVLMSWGHDEYMYQVMKFNKFSLPPEAFYMIRFHSFYPWHTGRDY</original>
    <variation>VPNLPCPSPSQTGSTSSGSCTTWGRSWPCSGSPSGLSSATPSPSDAVRRPPWFSATPPSRTTLTSRILDTAQSSGCISPTVGSTGSSCPGAMMQVRPLHQVPGPAGRGQAAALLPGAH</variation>
    <location>
        <begin position="114"/>
        <end position="231"/>
    </location>
</feature>
<feature type="splice variant" id="VSP_041668" description="In isoform 2." evidence="4">
    <location>
        <begin position="232"/>
        <end position="285"/>
    </location>
</feature>
<feature type="mutagenesis site" description="Strongly reduced enzyme activity." evidence="3">
    <original>K</original>
    <variation>S</variation>
    <location>
        <position position="127"/>
    </location>
</feature>
<feature type="sequence conflict" description="In Ref. 3; AAF25204." evidence="5" ref="3">
    <original>T</original>
    <variation>D</variation>
    <location>
        <position position="4"/>
    </location>
</feature>
<feature type="sequence conflict" description="In Ref. 2; AAK00766." evidence="5" ref="2">
    <original>Y</original>
    <variation>F</variation>
    <location>
        <position position="199"/>
    </location>
</feature>
<feature type="sequence conflict" description="In Ref. 2; AAK00766." evidence="5" ref="2">
    <original>FHS</original>
    <variation>VHF</variation>
    <location>
        <begin position="219"/>
        <end position="221"/>
    </location>
</feature>
<feature type="sequence conflict" description="In Ref. 3; AAF25204." evidence="5" ref="3">
    <original>I</original>
    <variation>T</variation>
    <location>
        <position position="282"/>
    </location>
</feature>
<feature type="helix" evidence="6">
    <location>
        <begin position="38"/>
        <end position="50"/>
    </location>
</feature>
<feature type="helix" evidence="6">
    <location>
        <begin position="53"/>
        <end position="63"/>
    </location>
</feature>
<feature type="strand" evidence="6">
    <location>
        <begin position="68"/>
        <end position="71"/>
    </location>
</feature>
<feature type="helix" evidence="6">
    <location>
        <begin position="73"/>
        <end position="79"/>
    </location>
</feature>
<feature type="helix" evidence="6">
    <location>
        <begin position="80"/>
        <end position="82"/>
    </location>
</feature>
<feature type="helix" evidence="6">
    <location>
        <begin position="95"/>
        <end position="109"/>
    </location>
</feature>
<feature type="helix" evidence="6">
    <location>
        <begin position="114"/>
        <end position="122"/>
    </location>
</feature>
<feature type="helix" evidence="6">
    <location>
        <begin position="125"/>
        <end position="127"/>
    </location>
</feature>
<feature type="helix" evidence="6">
    <location>
        <begin position="128"/>
        <end position="131"/>
    </location>
</feature>
<feature type="helix" evidence="6">
    <location>
        <begin position="136"/>
        <end position="138"/>
    </location>
</feature>
<feature type="strand" evidence="6">
    <location>
        <begin position="145"/>
        <end position="148"/>
    </location>
</feature>
<feature type="helix" evidence="6">
    <location>
        <begin position="157"/>
        <end position="160"/>
    </location>
</feature>
<feature type="helix" evidence="6">
    <location>
        <begin position="165"/>
        <end position="168"/>
    </location>
</feature>
<feature type="turn" evidence="6">
    <location>
        <begin position="170"/>
        <end position="172"/>
    </location>
</feature>
<feature type="strand" evidence="6">
    <location>
        <begin position="173"/>
        <end position="176"/>
    </location>
</feature>
<feature type="helix" evidence="6">
    <location>
        <begin position="185"/>
        <end position="187"/>
    </location>
</feature>
<feature type="helix" evidence="6">
    <location>
        <begin position="194"/>
        <end position="205"/>
    </location>
</feature>
<feature type="helix" evidence="6">
    <location>
        <begin position="211"/>
        <end position="219"/>
    </location>
</feature>
<feature type="helix" evidence="6">
    <location>
        <begin position="223"/>
        <end position="226"/>
    </location>
</feature>
<feature type="turn" evidence="6">
    <location>
        <begin position="232"/>
        <end position="234"/>
    </location>
</feature>
<feature type="helix" evidence="6">
    <location>
        <begin position="237"/>
        <end position="253"/>
    </location>
</feature>
<feature type="helix" evidence="6">
    <location>
        <begin position="264"/>
        <end position="278"/>
    </location>
</feature>
<feature type="strand" evidence="6">
    <location>
        <begin position="283"/>
        <end position="285"/>
    </location>
</feature>
<protein>
    <recommendedName>
        <fullName>Inositol oxygenase</fullName>
        <ecNumber>1.13.99.1</ecNumber>
    </recommendedName>
    <alternativeName>
        <fullName>Aldehyde reductase-like 6</fullName>
    </alternativeName>
    <alternativeName>
        <fullName>Kidney-specific protein 32</fullName>
    </alternativeName>
    <alternativeName>
        <fullName>Myo-inositol oxygenase</fullName>
        <shortName>MI oxygenase</shortName>
    </alternativeName>
    <alternativeName>
        <fullName>Renal-specific oxidoreductase</fullName>
    </alternativeName>
</protein>